<name>TM239_MOUSE</name>
<dbReference type="EMBL" id="AK006188">
    <property type="protein sequence ID" value="BAB24448.1"/>
    <property type="molecule type" value="mRNA"/>
</dbReference>
<dbReference type="EMBL" id="BX890605">
    <property type="status" value="NOT_ANNOTATED_CDS"/>
    <property type="molecule type" value="Genomic_DNA"/>
</dbReference>
<dbReference type="EMBL" id="CH466519">
    <property type="protein sequence ID" value="EDL28264.1"/>
    <property type="molecule type" value="Genomic_DNA"/>
</dbReference>
<dbReference type="EMBL" id="BC049728">
    <property type="protein sequence ID" value="AAH49728.1"/>
    <property type="molecule type" value="mRNA"/>
</dbReference>
<dbReference type="CCDS" id="CCDS16742.1"/>
<dbReference type="RefSeq" id="NP_080029.1">
    <property type="nucleotide sequence ID" value="NM_025753.3"/>
</dbReference>
<dbReference type="FunCoup" id="Q9DA47">
    <property type="interactions" value="2"/>
</dbReference>
<dbReference type="STRING" id="10090.ENSMUSP00000055299"/>
<dbReference type="PhosphoSitePlus" id="Q9DA47"/>
<dbReference type="PaxDb" id="10090-ENSMUSP00000055299"/>
<dbReference type="ProteomicsDB" id="259413"/>
<dbReference type="TopDownProteomics" id="Q9DA47"/>
<dbReference type="Antibodypedia" id="74574">
    <property type="antibodies" value="4 antibodies from 4 providers"/>
</dbReference>
<dbReference type="DNASU" id="66766"/>
<dbReference type="Ensembl" id="ENSMUST00000055421.6">
    <property type="protein sequence ID" value="ENSMUSP00000055299.5"/>
    <property type="gene ID" value="ENSMUSG00000049692.8"/>
</dbReference>
<dbReference type="GeneID" id="66766"/>
<dbReference type="KEGG" id="mmu:66766"/>
<dbReference type="UCSC" id="uc008mit.1">
    <property type="organism name" value="mouse"/>
</dbReference>
<dbReference type="AGR" id="MGI:1914016"/>
<dbReference type="CTD" id="100288797"/>
<dbReference type="MGI" id="MGI:1914016">
    <property type="gene designation" value="Tmem239"/>
</dbReference>
<dbReference type="VEuPathDB" id="HostDB:ENSMUSG00000049692"/>
<dbReference type="eggNOG" id="ENOG502R18E">
    <property type="taxonomic scope" value="Eukaryota"/>
</dbReference>
<dbReference type="GeneTree" id="ENSGT00390000005090"/>
<dbReference type="HOGENOM" id="CLU_125766_0_0_1"/>
<dbReference type="InParanoid" id="Q9DA47"/>
<dbReference type="OMA" id="RWCMCHV"/>
<dbReference type="OrthoDB" id="9451631at2759"/>
<dbReference type="PhylomeDB" id="Q9DA47"/>
<dbReference type="TreeFam" id="TF337840"/>
<dbReference type="BioGRID-ORCS" id="66766">
    <property type="hits" value="0 hits in 46 CRISPR screens"/>
</dbReference>
<dbReference type="ChiTaRS" id="Tmem239">
    <property type="organism name" value="mouse"/>
</dbReference>
<dbReference type="PRO" id="PR:Q9DA47"/>
<dbReference type="Proteomes" id="UP000000589">
    <property type="component" value="Chromosome 2"/>
</dbReference>
<dbReference type="RNAct" id="Q9DA47">
    <property type="molecule type" value="protein"/>
</dbReference>
<dbReference type="Bgee" id="ENSMUSG00000049692">
    <property type="expression patterns" value="Expressed in testis and 17 other cell types or tissues"/>
</dbReference>
<dbReference type="GO" id="GO:0016020">
    <property type="term" value="C:membrane"/>
    <property type="evidence" value="ECO:0007669"/>
    <property type="project" value="UniProtKB-SubCell"/>
</dbReference>
<dbReference type="InterPro" id="IPR031694">
    <property type="entry name" value="TMEM239"/>
</dbReference>
<dbReference type="PANTHER" id="PTHR37356">
    <property type="entry name" value="TRANSMEMBRANE PROTEIN 239"/>
    <property type="match status" value="1"/>
</dbReference>
<dbReference type="PANTHER" id="PTHR37356:SF1">
    <property type="entry name" value="TRANSMEMBRANE PROTEIN 239"/>
    <property type="match status" value="1"/>
</dbReference>
<dbReference type="Pfam" id="PF15841">
    <property type="entry name" value="TMEM239"/>
    <property type="match status" value="1"/>
</dbReference>
<comment type="subcellular location">
    <subcellularLocation>
        <location evidence="2">Membrane</location>
        <topology evidence="2">Multi-pass membrane protein</topology>
    </subcellularLocation>
</comment>
<feature type="chain" id="PRO_0000413695" description="Transmembrane protein 239">
    <location>
        <begin position="1"/>
        <end position="151"/>
    </location>
</feature>
<feature type="transmembrane region" description="Helical" evidence="1">
    <location>
        <begin position="61"/>
        <end position="81"/>
    </location>
</feature>
<feature type="transmembrane region" description="Helical" evidence="1">
    <location>
        <begin position="85"/>
        <end position="105"/>
    </location>
</feature>
<feature type="transmembrane region" description="Helical" evidence="1">
    <location>
        <begin position="116"/>
        <end position="138"/>
    </location>
</feature>
<protein>
    <recommendedName>
        <fullName>Transmembrane protein 239</fullName>
    </recommendedName>
</protein>
<organism>
    <name type="scientific">Mus musculus</name>
    <name type="common">Mouse</name>
    <dbReference type="NCBI Taxonomy" id="10090"/>
    <lineage>
        <taxon>Eukaryota</taxon>
        <taxon>Metazoa</taxon>
        <taxon>Chordata</taxon>
        <taxon>Craniata</taxon>
        <taxon>Vertebrata</taxon>
        <taxon>Euteleostomi</taxon>
        <taxon>Mammalia</taxon>
        <taxon>Eutheria</taxon>
        <taxon>Euarchontoglires</taxon>
        <taxon>Glires</taxon>
        <taxon>Rodentia</taxon>
        <taxon>Myomorpha</taxon>
        <taxon>Muroidea</taxon>
        <taxon>Muridae</taxon>
        <taxon>Murinae</taxon>
        <taxon>Mus</taxon>
        <taxon>Mus</taxon>
    </lineage>
</organism>
<evidence type="ECO:0000255" key="1"/>
<evidence type="ECO:0000305" key="2"/>
<keyword id="KW-0472">Membrane</keyword>
<keyword id="KW-1185">Reference proteome</keyword>
<keyword id="KW-0812">Transmembrane</keyword>
<keyword id="KW-1133">Transmembrane helix</keyword>
<gene>
    <name type="primary">Tmem239</name>
</gene>
<proteinExistence type="evidence at transcript level"/>
<sequence>MQQPRVESDIIGAGEGPQRAVPWSAWIIRQDWVRWWVCHIPRSWTQWWNTSGWRQPLQRMLWGLEGTLYLLLALMLCHALFTTGSYLLSSLWPVVAVMWSHLLPAILLLVLSALPALLFAASFLLLFSTLLSLVGLLTSMTQPGYAQDLDQ</sequence>
<accession>Q9DA47</accession>
<reference key="1">
    <citation type="journal article" date="2005" name="Science">
        <title>The transcriptional landscape of the mammalian genome.</title>
        <authorList>
            <person name="Carninci P."/>
            <person name="Kasukawa T."/>
            <person name="Katayama S."/>
            <person name="Gough J."/>
            <person name="Frith M.C."/>
            <person name="Maeda N."/>
            <person name="Oyama R."/>
            <person name="Ravasi T."/>
            <person name="Lenhard B."/>
            <person name="Wells C."/>
            <person name="Kodzius R."/>
            <person name="Shimokawa K."/>
            <person name="Bajic V.B."/>
            <person name="Brenner S.E."/>
            <person name="Batalov S."/>
            <person name="Forrest A.R."/>
            <person name="Zavolan M."/>
            <person name="Davis M.J."/>
            <person name="Wilming L.G."/>
            <person name="Aidinis V."/>
            <person name="Allen J.E."/>
            <person name="Ambesi-Impiombato A."/>
            <person name="Apweiler R."/>
            <person name="Aturaliya R.N."/>
            <person name="Bailey T.L."/>
            <person name="Bansal M."/>
            <person name="Baxter L."/>
            <person name="Beisel K.W."/>
            <person name="Bersano T."/>
            <person name="Bono H."/>
            <person name="Chalk A.M."/>
            <person name="Chiu K.P."/>
            <person name="Choudhary V."/>
            <person name="Christoffels A."/>
            <person name="Clutterbuck D.R."/>
            <person name="Crowe M.L."/>
            <person name="Dalla E."/>
            <person name="Dalrymple B.P."/>
            <person name="de Bono B."/>
            <person name="Della Gatta G."/>
            <person name="di Bernardo D."/>
            <person name="Down T."/>
            <person name="Engstrom P."/>
            <person name="Fagiolini M."/>
            <person name="Faulkner G."/>
            <person name="Fletcher C.F."/>
            <person name="Fukushima T."/>
            <person name="Furuno M."/>
            <person name="Futaki S."/>
            <person name="Gariboldi M."/>
            <person name="Georgii-Hemming P."/>
            <person name="Gingeras T.R."/>
            <person name="Gojobori T."/>
            <person name="Green R.E."/>
            <person name="Gustincich S."/>
            <person name="Harbers M."/>
            <person name="Hayashi Y."/>
            <person name="Hensch T.K."/>
            <person name="Hirokawa N."/>
            <person name="Hill D."/>
            <person name="Huminiecki L."/>
            <person name="Iacono M."/>
            <person name="Ikeo K."/>
            <person name="Iwama A."/>
            <person name="Ishikawa T."/>
            <person name="Jakt M."/>
            <person name="Kanapin A."/>
            <person name="Katoh M."/>
            <person name="Kawasawa Y."/>
            <person name="Kelso J."/>
            <person name="Kitamura H."/>
            <person name="Kitano H."/>
            <person name="Kollias G."/>
            <person name="Krishnan S.P."/>
            <person name="Kruger A."/>
            <person name="Kummerfeld S.K."/>
            <person name="Kurochkin I.V."/>
            <person name="Lareau L.F."/>
            <person name="Lazarevic D."/>
            <person name="Lipovich L."/>
            <person name="Liu J."/>
            <person name="Liuni S."/>
            <person name="McWilliam S."/>
            <person name="Madan Babu M."/>
            <person name="Madera M."/>
            <person name="Marchionni L."/>
            <person name="Matsuda H."/>
            <person name="Matsuzawa S."/>
            <person name="Miki H."/>
            <person name="Mignone F."/>
            <person name="Miyake S."/>
            <person name="Morris K."/>
            <person name="Mottagui-Tabar S."/>
            <person name="Mulder N."/>
            <person name="Nakano N."/>
            <person name="Nakauchi H."/>
            <person name="Ng P."/>
            <person name="Nilsson R."/>
            <person name="Nishiguchi S."/>
            <person name="Nishikawa S."/>
            <person name="Nori F."/>
            <person name="Ohara O."/>
            <person name="Okazaki Y."/>
            <person name="Orlando V."/>
            <person name="Pang K.C."/>
            <person name="Pavan W.J."/>
            <person name="Pavesi G."/>
            <person name="Pesole G."/>
            <person name="Petrovsky N."/>
            <person name="Piazza S."/>
            <person name="Reed J."/>
            <person name="Reid J.F."/>
            <person name="Ring B.Z."/>
            <person name="Ringwald M."/>
            <person name="Rost B."/>
            <person name="Ruan Y."/>
            <person name="Salzberg S.L."/>
            <person name="Sandelin A."/>
            <person name="Schneider C."/>
            <person name="Schoenbach C."/>
            <person name="Sekiguchi K."/>
            <person name="Semple C.A."/>
            <person name="Seno S."/>
            <person name="Sessa L."/>
            <person name="Sheng Y."/>
            <person name="Shibata Y."/>
            <person name="Shimada H."/>
            <person name="Shimada K."/>
            <person name="Silva D."/>
            <person name="Sinclair B."/>
            <person name="Sperling S."/>
            <person name="Stupka E."/>
            <person name="Sugiura K."/>
            <person name="Sultana R."/>
            <person name="Takenaka Y."/>
            <person name="Taki K."/>
            <person name="Tammoja K."/>
            <person name="Tan S.L."/>
            <person name="Tang S."/>
            <person name="Taylor M.S."/>
            <person name="Tegner J."/>
            <person name="Teichmann S.A."/>
            <person name="Ueda H.R."/>
            <person name="van Nimwegen E."/>
            <person name="Verardo R."/>
            <person name="Wei C.L."/>
            <person name="Yagi K."/>
            <person name="Yamanishi H."/>
            <person name="Zabarovsky E."/>
            <person name="Zhu S."/>
            <person name="Zimmer A."/>
            <person name="Hide W."/>
            <person name="Bult C."/>
            <person name="Grimmond S.M."/>
            <person name="Teasdale R.D."/>
            <person name="Liu E.T."/>
            <person name="Brusic V."/>
            <person name="Quackenbush J."/>
            <person name="Wahlestedt C."/>
            <person name="Mattick J.S."/>
            <person name="Hume D.A."/>
            <person name="Kai C."/>
            <person name="Sasaki D."/>
            <person name="Tomaru Y."/>
            <person name="Fukuda S."/>
            <person name="Kanamori-Katayama M."/>
            <person name="Suzuki M."/>
            <person name="Aoki J."/>
            <person name="Arakawa T."/>
            <person name="Iida J."/>
            <person name="Imamura K."/>
            <person name="Itoh M."/>
            <person name="Kato T."/>
            <person name="Kawaji H."/>
            <person name="Kawagashira N."/>
            <person name="Kawashima T."/>
            <person name="Kojima M."/>
            <person name="Kondo S."/>
            <person name="Konno H."/>
            <person name="Nakano K."/>
            <person name="Ninomiya N."/>
            <person name="Nishio T."/>
            <person name="Okada M."/>
            <person name="Plessy C."/>
            <person name="Shibata K."/>
            <person name="Shiraki T."/>
            <person name="Suzuki S."/>
            <person name="Tagami M."/>
            <person name="Waki K."/>
            <person name="Watahiki A."/>
            <person name="Okamura-Oho Y."/>
            <person name="Suzuki H."/>
            <person name="Kawai J."/>
            <person name="Hayashizaki Y."/>
        </authorList>
    </citation>
    <scope>NUCLEOTIDE SEQUENCE [LARGE SCALE MRNA]</scope>
    <source>
        <strain>C57BL/6J</strain>
        <tissue>Testis</tissue>
    </source>
</reference>
<reference key="2">
    <citation type="journal article" date="2009" name="PLoS Biol.">
        <title>Lineage-specific biology revealed by a finished genome assembly of the mouse.</title>
        <authorList>
            <person name="Church D.M."/>
            <person name="Goodstadt L."/>
            <person name="Hillier L.W."/>
            <person name="Zody M.C."/>
            <person name="Goldstein S."/>
            <person name="She X."/>
            <person name="Bult C.J."/>
            <person name="Agarwala R."/>
            <person name="Cherry J.L."/>
            <person name="DiCuccio M."/>
            <person name="Hlavina W."/>
            <person name="Kapustin Y."/>
            <person name="Meric P."/>
            <person name="Maglott D."/>
            <person name="Birtle Z."/>
            <person name="Marques A.C."/>
            <person name="Graves T."/>
            <person name="Zhou S."/>
            <person name="Teague B."/>
            <person name="Potamousis K."/>
            <person name="Churas C."/>
            <person name="Place M."/>
            <person name="Herschleb J."/>
            <person name="Runnheim R."/>
            <person name="Forrest D."/>
            <person name="Amos-Landgraf J."/>
            <person name="Schwartz D.C."/>
            <person name="Cheng Z."/>
            <person name="Lindblad-Toh K."/>
            <person name="Eichler E.E."/>
            <person name="Ponting C.P."/>
        </authorList>
    </citation>
    <scope>NUCLEOTIDE SEQUENCE [LARGE SCALE GENOMIC DNA]</scope>
    <source>
        <strain>C57BL/6J</strain>
    </source>
</reference>
<reference key="3">
    <citation type="submission" date="2005-07" db="EMBL/GenBank/DDBJ databases">
        <authorList>
            <person name="Mural R.J."/>
            <person name="Adams M.D."/>
            <person name="Myers E.W."/>
            <person name="Smith H.O."/>
            <person name="Venter J.C."/>
        </authorList>
    </citation>
    <scope>NUCLEOTIDE SEQUENCE [LARGE SCALE GENOMIC DNA]</scope>
</reference>
<reference key="4">
    <citation type="journal article" date="2004" name="Genome Res.">
        <title>The status, quality, and expansion of the NIH full-length cDNA project: the Mammalian Gene Collection (MGC).</title>
        <authorList>
            <consortium name="The MGC Project Team"/>
        </authorList>
    </citation>
    <scope>NUCLEOTIDE SEQUENCE [LARGE SCALE MRNA]</scope>
    <source>
        <tissue>Testis</tissue>
    </source>
</reference>